<sequence length="90" mass="10252">MAVKIRLTRMGSKKKPFYRINVADSRAPRDGRFIETVGTYNPLVAENQITIKEDRVLEWLSKGAQPSDTVRNILSKAGVMAKFHDQKFSK</sequence>
<accession>P66448</accession>
<accession>P58124</accession>
<organism>
    <name type="scientific">Streptococcus pyogenes serotype M18 (strain MGAS8232)</name>
    <dbReference type="NCBI Taxonomy" id="186103"/>
    <lineage>
        <taxon>Bacteria</taxon>
        <taxon>Bacillati</taxon>
        <taxon>Bacillota</taxon>
        <taxon>Bacilli</taxon>
        <taxon>Lactobacillales</taxon>
        <taxon>Streptococcaceae</taxon>
        <taxon>Streptococcus</taxon>
    </lineage>
</organism>
<evidence type="ECO:0000255" key="1">
    <source>
        <dbReference type="HAMAP-Rule" id="MF_00385"/>
    </source>
</evidence>
<evidence type="ECO:0000305" key="2"/>
<protein>
    <recommendedName>
        <fullName evidence="1">Small ribosomal subunit protein bS16</fullName>
    </recommendedName>
    <alternativeName>
        <fullName evidence="2">30S ribosomal protein S16</fullName>
    </alternativeName>
</protein>
<feature type="chain" id="PRO_0000167262" description="Small ribosomal subunit protein bS16">
    <location>
        <begin position="1"/>
        <end position="90"/>
    </location>
</feature>
<dbReference type="EMBL" id="AE009949">
    <property type="protein sequence ID" value="AAL97551.1"/>
    <property type="molecule type" value="Genomic_DNA"/>
</dbReference>
<dbReference type="RefSeq" id="WP_002985074.1">
    <property type="nucleotide sequence ID" value="NC_003485.1"/>
</dbReference>
<dbReference type="SMR" id="P66448"/>
<dbReference type="KEGG" id="spm:spyM18_0900"/>
<dbReference type="HOGENOM" id="CLU_100590_5_0_9"/>
<dbReference type="GO" id="GO:0005737">
    <property type="term" value="C:cytoplasm"/>
    <property type="evidence" value="ECO:0007669"/>
    <property type="project" value="UniProtKB-ARBA"/>
</dbReference>
<dbReference type="GO" id="GO:0015935">
    <property type="term" value="C:small ribosomal subunit"/>
    <property type="evidence" value="ECO:0007669"/>
    <property type="project" value="TreeGrafter"/>
</dbReference>
<dbReference type="GO" id="GO:0003735">
    <property type="term" value="F:structural constituent of ribosome"/>
    <property type="evidence" value="ECO:0007669"/>
    <property type="project" value="InterPro"/>
</dbReference>
<dbReference type="GO" id="GO:0006412">
    <property type="term" value="P:translation"/>
    <property type="evidence" value="ECO:0007669"/>
    <property type="project" value="UniProtKB-UniRule"/>
</dbReference>
<dbReference type="FunFam" id="3.30.1320.10:FF:000002">
    <property type="entry name" value="30S ribosomal protein S16"/>
    <property type="match status" value="1"/>
</dbReference>
<dbReference type="Gene3D" id="3.30.1320.10">
    <property type="match status" value="1"/>
</dbReference>
<dbReference type="HAMAP" id="MF_00385">
    <property type="entry name" value="Ribosomal_bS16"/>
    <property type="match status" value="1"/>
</dbReference>
<dbReference type="InterPro" id="IPR000307">
    <property type="entry name" value="Ribosomal_bS16"/>
</dbReference>
<dbReference type="InterPro" id="IPR023803">
    <property type="entry name" value="Ribosomal_bS16_dom_sf"/>
</dbReference>
<dbReference type="NCBIfam" id="TIGR00002">
    <property type="entry name" value="S16"/>
    <property type="match status" value="1"/>
</dbReference>
<dbReference type="PANTHER" id="PTHR12919">
    <property type="entry name" value="30S RIBOSOMAL PROTEIN S16"/>
    <property type="match status" value="1"/>
</dbReference>
<dbReference type="PANTHER" id="PTHR12919:SF20">
    <property type="entry name" value="SMALL RIBOSOMAL SUBUNIT PROTEIN BS16M"/>
    <property type="match status" value="1"/>
</dbReference>
<dbReference type="Pfam" id="PF00886">
    <property type="entry name" value="Ribosomal_S16"/>
    <property type="match status" value="1"/>
</dbReference>
<dbReference type="SUPFAM" id="SSF54565">
    <property type="entry name" value="Ribosomal protein S16"/>
    <property type="match status" value="1"/>
</dbReference>
<comment type="similarity">
    <text evidence="1">Belongs to the bacterial ribosomal protein bS16 family.</text>
</comment>
<name>RS16_STRP8</name>
<keyword id="KW-0687">Ribonucleoprotein</keyword>
<keyword id="KW-0689">Ribosomal protein</keyword>
<reference key="1">
    <citation type="journal article" date="2002" name="Proc. Natl. Acad. Sci. U.S.A.">
        <title>Genome sequence and comparative microarray analysis of serotype M18 group A Streptococcus strains associated with acute rheumatic fever outbreaks.</title>
        <authorList>
            <person name="Smoot J.C."/>
            <person name="Barbian K.D."/>
            <person name="Van Gompel J.J."/>
            <person name="Smoot L.M."/>
            <person name="Chaussee M.S."/>
            <person name="Sylva G.L."/>
            <person name="Sturdevant D.E."/>
            <person name="Ricklefs S.M."/>
            <person name="Porcella S.F."/>
            <person name="Parkins L.D."/>
            <person name="Beres S.B."/>
            <person name="Campbell D.S."/>
            <person name="Smith T.M."/>
            <person name="Zhang Q."/>
            <person name="Kapur V."/>
            <person name="Daly J.A."/>
            <person name="Veasy L.G."/>
            <person name="Musser J.M."/>
        </authorList>
    </citation>
    <scope>NUCLEOTIDE SEQUENCE [LARGE SCALE GENOMIC DNA]</scope>
    <source>
        <strain>MGAS8232</strain>
    </source>
</reference>
<proteinExistence type="inferred from homology"/>
<gene>
    <name evidence="1" type="primary">rpsP</name>
    <name type="ordered locus">spyM18_0900</name>
</gene>